<dbReference type="EC" id="4.2.1.9" evidence="1"/>
<dbReference type="EMBL" id="CP000356">
    <property type="protein sequence ID" value="ABF52905.1"/>
    <property type="molecule type" value="Genomic_DNA"/>
</dbReference>
<dbReference type="RefSeq" id="WP_011541490.1">
    <property type="nucleotide sequence ID" value="NC_008048.1"/>
</dbReference>
<dbReference type="SMR" id="Q1GTW7"/>
<dbReference type="STRING" id="317655.Sala_1189"/>
<dbReference type="KEGG" id="sal:Sala_1189"/>
<dbReference type="eggNOG" id="COG0129">
    <property type="taxonomic scope" value="Bacteria"/>
</dbReference>
<dbReference type="HOGENOM" id="CLU_014271_4_2_5"/>
<dbReference type="OrthoDB" id="9807077at2"/>
<dbReference type="UniPathway" id="UPA00047">
    <property type="reaction ID" value="UER00057"/>
</dbReference>
<dbReference type="UniPathway" id="UPA00049">
    <property type="reaction ID" value="UER00061"/>
</dbReference>
<dbReference type="Proteomes" id="UP000006578">
    <property type="component" value="Chromosome"/>
</dbReference>
<dbReference type="GO" id="GO:0005829">
    <property type="term" value="C:cytosol"/>
    <property type="evidence" value="ECO:0007669"/>
    <property type="project" value="TreeGrafter"/>
</dbReference>
<dbReference type="GO" id="GO:0051537">
    <property type="term" value="F:2 iron, 2 sulfur cluster binding"/>
    <property type="evidence" value="ECO:0007669"/>
    <property type="project" value="UniProtKB-UniRule"/>
</dbReference>
<dbReference type="GO" id="GO:0004160">
    <property type="term" value="F:dihydroxy-acid dehydratase activity"/>
    <property type="evidence" value="ECO:0007669"/>
    <property type="project" value="UniProtKB-UniRule"/>
</dbReference>
<dbReference type="GO" id="GO:0000287">
    <property type="term" value="F:magnesium ion binding"/>
    <property type="evidence" value="ECO:0007669"/>
    <property type="project" value="UniProtKB-UniRule"/>
</dbReference>
<dbReference type="GO" id="GO:0009097">
    <property type="term" value="P:isoleucine biosynthetic process"/>
    <property type="evidence" value="ECO:0007669"/>
    <property type="project" value="UniProtKB-UniRule"/>
</dbReference>
<dbReference type="GO" id="GO:0009099">
    <property type="term" value="P:L-valine biosynthetic process"/>
    <property type="evidence" value="ECO:0007669"/>
    <property type="project" value="UniProtKB-UniRule"/>
</dbReference>
<dbReference type="FunFam" id="3.50.30.80:FF:000001">
    <property type="entry name" value="Dihydroxy-acid dehydratase"/>
    <property type="match status" value="1"/>
</dbReference>
<dbReference type="Gene3D" id="3.50.30.80">
    <property type="entry name" value="IlvD/EDD C-terminal domain-like"/>
    <property type="match status" value="1"/>
</dbReference>
<dbReference type="HAMAP" id="MF_00012">
    <property type="entry name" value="IlvD"/>
    <property type="match status" value="1"/>
</dbReference>
<dbReference type="InterPro" id="IPR042096">
    <property type="entry name" value="Dihydro-acid_dehy_C"/>
</dbReference>
<dbReference type="InterPro" id="IPR004404">
    <property type="entry name" value="DihydroxyA_deHydtase"/>
</dbReference>
<dbReference type="InterPro" id="IPR020558">
    <property type="entry name" value="DiOHA_6PGluconate_deHydtase_CS"/>
</dbReference>
<dbReference type="InterPro" id="IPR056740">
    <property type="entry name" value="ILV_EDD_C"/>
</dbReference>
<dbReference type="InterPro" id="IPR000581">
    <property type="entry name" value="ILV_EDD_N"/>
</dbReference>
<dbReference type="InterPro" id="IPR037237">
    <property type="entry name" value="IlvD/EDD_N"/>
</dbReference>
<dbReference type="NCBIfam" id="TIGR00110">
    <property type="entry name" value="ilvD"/>
    <property type="match status" value="1"/>
</dbReference>
<dbReference type="NCBIfam" id="NF009103">
    <property type="entry name" value="PRK12448.1"/>
    <property type="match status" value="1"/>
</dbReference>
<dbReference type="PANTHER" id="PTHR43661">
    <property type="entry name" value="D-XYLONATE DEHYDRATASE"/>
    <property type="match status" value="1"/>
</dbReference>
<dbReference type="PANTHER" id="PTHR43661:SF3">
    <property type="entry name" value="D-XYLONATE DEHYDRATASE YAGF-RELATED"/>
    <property type="match status" value="1"/>
</dbReference>
<dbReference type="Pfam" id="PF24877">
    <property type="entry name" value="ILV_EDD_C"/>
    <property type="match status" value="1"/>
</dbReference>
<dbReference type="Pfam" id="PF00920">
    <property type="entry name" value="ILVD_EDD_N"/>
    <property type="match status" value="1"/>
</dbReference>
<dbReference type="SUPFAM" id="SSF143975">
    <property type="entry name" value="IlvD/EDD N-terminal domain-like"/>
    <property type="match status" value="1"/>
</dbReference>
<dbReference type="SUPFAM" id="SSF52016">
    <property type="entry name" value="LeuD/IlvD-like"/>
    <property type="match status" value="1"/>
</dbReference>
<dbReference type="PROSITE" id="PS00886">
    <property type="entry name" value="ILVD_EDD_1"/>
    <property type="match status" value="1"/>
</dbReference>
<dbReference type="PROSITE" id="PS00887">
    <property type="entry name" value="ILVD_EDD_2"/>
    <property type="match status" value="1"/>
</dbReference>
<proteinExistence type="inferred from homology"/>
<evidence type="ECO:0000255" key="1">
    <source>
        <dbReference type="HAMAP-Rule" id="MF_00012"/>
    </source>
</evidence>
<protein>
    <recommendedName>
        <fullName evidence="1">Dihydroxy-acid dehydratase</fullName>
        <shortName evidence="1">DAD</shortName>
        <ecNumber evidence="1">4.2.1.9</ecNumber>
    </recommendedName>
</protein>
<accession>Q1GTW7</accession>
<organism>
    <name type="scientific">Sphingopyxis alaskensis (strain DSM 13593 / LMG 18877 / RB2256)</name>
    <name type="common">Sphingomonas alaskensis</name>
    <dbReference type="NCBI Taxonomy" id="317655"/>
    <lineage>
        <taxon>Bacteria</taxon>
        <taxon>Pseudomonadati</taxon>
        <taxon>Pseudomonadota</taxon>
        <taxon>Alphaproteobacteria</taxon>
        <taxon>Sphingomonadales</taxon>
        <taxon>Sphingomonadaceae</taxon>
        <taxon>Sphingopyxis</taxon>
    </lineage>
</organism>
<gene>
    <name evidence="1" type="primary">ilvD</name>
    <name type="ordered locus">Sala_1189</name>
</gene>
<feature type="chain" id="PRO_1000001064" description="Dihydroxy-acid dehydratase">
    <location>
        <begin position="1"/>
        <end position="619"/>
    </location>
</feature>
<feature type="active site" description="Proton acceptor" evidence="1">
    <location>
        <position position="517"/>
    </location>
</feature>
<feature type="binding site" evidence="1">
    <location>
        <position position="81"/>
    </location>
    <ligand>
        <name>Mg(2+)</name>
        <dbReference type="ChEBI" id="CHEBI:18420"/>
    </ligand>
</feature>
<feature type="binding site" evidence="1">
    <location>
        <position position="122"/>
    </location>
    <ligand>
        <name>[2Fe-2S] cluster</name>
        <dbReference type="ChEBI" id="CHEBI:190135"/>
    </ligand>
</feature>
<feature type="binding site" evidence="1">
    <location>
        <position position="123"/>
    </location>
    <ligand>
        <name>Mg(2+)</name>
        <dbReference type="ChEBI" id="CHEBI:18420"/>
    </ligand>
</feature>
<feature type="binding site" description="via carbamate group" evidence="1">
    <location>
        <position position="124"/>
    </location>
    <ligand>
        <name>Mg(2+)</name>
        <dbReference type="ChEBI" id="CHEBI:18420"/>
    </ligand>
</feature>
<feature type="binding site" evidence="1">
    <location>
        <position position="195"/>
    </location>
    <ligand>
        <name>[2Fe-2S] cluster</name>
        <dbReference type="ChEBI" id="CHEBI:190135"/>
    </ligand>
</feature>
<feature type="binding site" evidence="1">
    <location>
        <position position="491"/>
    </location>
    <ligand>
        <name>Mg(2+)</name>
        <dbReference type="ChEBI" id="CHEBI:18420"/>
    </ligand>
</feature>
<feature type="modified residue" description="N6-carboxylysine" evidence="1">
    <location>
        <position position="124"/>
    </location>
</feature>
<sequence>MPSYRSRTTTHGRNMAGARGLWRATGMKDSDFGKPIIAVVNSFTQFVPGHVHLKDLGQMVAREIEAAGGVAKEFNTIAVDDGIAMGHDGMLYSLPSRDLIADSVEYMVNAHCADAMVCISNCDKITPGMLMAALRINIPVVFVSGGPMEAGKVVLKGKEVALDLVDAMVAAADEKYSDEEVLAIEQAACPTCGSCSGMFTANSMNCLTEALGLSLPGNGSTLATHADRKELFLRAGRIVVEMCRRHYEEGDDSVLPRNIATFEAFENAMSLDIAMGGSTNTVLHLLAAAHEAGVDFTMEDIDRLSRRVPCLSKVAPAKSDVHMEDVHRAGGIMAILGELDRAGLLHAHLPTVHSATLGDALNKWDIARTNDPEVQKFFMAAPGGVPTQTAFSQARRWDSLDLDRISGVIRSADHAFSKDGGLAVLSGNVAPDGCIVKTAGVDESILKFSGPAKVFESQDAAVAGILTGQVEAGDVVVIRYEGPKGGPGMQEMLYPTSYLKSKGLGAACALVTDGRFSGGTSGLSIGHVSPEAAEGGTIGLVENGDLINIDIPSRTITLAVADSVLAERRAAMEAKGDAAWQPAKPRPRKVSVALQAYAAMTTSAARGAVRDLSQLKGKG</sequence>
<keyword id="KW-0001">2Fe-2S</keyword>
<keyword id="KW-0028">Amino-acid biosynthesis</keyword>
<keyword id="KW-0100">Branched-chain amino acid biosynthesis</keyword>
<keyword id="KW-0408">Iron</keyword>
<keyword id="KW-0411">Iron-sulfur</keyword>
<keyword id="KW-0456">Lyase</keyword>
<keyword id="KW-0460">Magnesium</keyword>
<keyword id="KW-0479">Metal-binding</keyword>
<keyword id="KW-1185">Reference proteome</keyword>
<reference key="1">
    <citation type="journal article" date="2009" name="Proc. Natl. Acad. Sci. U.S.A.">
        <title>The genomic basis of trophic strategy in marine bacteria.</title>
        <authorList>
            <person name="Lauro F.M."/>
            <person name="McDougald D."/>
            <person name="Thomas T."/>
            <person name="Williams T.J."/>
            <person name="Egan S."/>
            <person name="Rice S."/>
            <person name="DeMaere M.Z."/>
            <person name="Ting L."/>
            <person name="Ertan H."/>
            <person name="Johnson J."/>
            <person name="Ferriera S."/>
            <person name="Lapidus A."/>
            <person name="Anderson I."/>
            <person name="Kyrpides N."/>
            <person name="Munk A.C."/>
            <person name="Detter C."/>
            <person name="Han C.S."/>
            <person name="Brown M.V."/>
            <person name="Robb F.T."/>
            <person name="Kjelleberg S."/>
            <person name="Cavicchioli R."/>
        </authorList>
    </citation>
    <scope>NUCLEOTIDE SEQUENCE [LARGE SCALE GENOMIC DNA]</scope>
    <source>
        <strain>DSM 13593 / LMG 18877 / RB2256</strain>
    </source>
</reference>
<name>ILVD_SPHAL</name>
<comment type="function">
    <text evidence="1">Functions in the biosynthesis of branched-chain amino acids. Catalyzes the dehydration of (2R,3R)-2,3-dihydroxy-3-methylpentanoate (2,3-dihydroxy-3-methylvalerate) into 2-oxo-3-methylpentanoate (2-oxo-3-methylvalerate) and of (2R)-2,3-dihydroxy-3-methylbutanoate (2,3-dihydroxyisovalerate) into 2-oxo-3-methylbutanoate (2-oxoisovalerate), the penultimate precursor to L-isoleucine and L-valine, respectively.</text>
</comment>
<comment type="catalytic activity">
    <reaction evidence="1">
        <text>(2R)-2,3-dihydroxy-3-methylbutanoate = 3-methyl-2-oxobutanoate + H2O</text>
        <dbReference type="Rhea" id="RHEA:24809"/>
        <dbReference type="ChEBI" id="CHEBI:11851"/>
        <dbReference type="ChEBI" id="CHEBI:15377"/>
        <dbReference type="ChEBI" id="CHEBI:49072"/>
        <dbReference type="EC" id="4.2.1.9"/>
    </reaction>
    <physiologicalReaction direction="left-to-right" evidence="1">
        <dbReference type="Rhea" id="RHEA:24810"/>
    </physiologicalReaction>
</comment>
<comment type="catalytic activity">
    <reaction evidence="1">
        <text>(2R,3R)-2,3-dihydroxy-3-methylpentanoate = (S)-3-methyl-2-oxopentanoate + H2O</text>
        <dbReference type="Rhea" id="RHEA:27694"/>
        <dbReference type="ChEBI" id="CHEBI:15377"/>
        <dbReference type="ChEBI" id="CHEBI:35146"/>
        <dbReference type="ChEBI" id="CHEBI:49258"/>
        <dbReference type="EC" id="4.2.1.9"/>
    </reaction>
    <physiologicalReaction direction="left-to-right" evidence="1">
        <dbReference type="Rhea" id="RHEA:27695"/>
    </physiologicalReaction>
</comment>
<comment type="cofactor">
    <cofactor evidence="1">
        <name>[2Fe-2S] cluster</name>
        <dbReference type="ChEBI" id="CHEBI:190135"/>
    </cofactor>
    <text evidence="1">Binds 1 [2Fe-2S] cluster per subunit. This cluster acts as a Lewis acid cofactor.</text>
</comment>
<comment type="cofactor">
    <cofactor evidence="1">
        <name>Mg(2+)</name>
        <dbReference type="ChEBI" id="CHEBI:18420"/>
    </cofactor>
</comment>
<comment type="pathway">
    <text evidence="1">Amino-acid biosynthesis; L-isoleucine biosynthesis; L-isoleucine from 2-oxobutanoate: step 3/4.</text>
</comment>
<comment type="pathway">
    <text evidence="1">Amino-acid biosynthesis; L-valine biosynthesis; L-valine from pyruvate: step 3/4.</text>
</comment>
<comment type="subunit">
    <text evidence="1">Homodimer.</text>
</comment>
<comment type="similarity">
    <text evidence="1">Belongs to the IlvD/Edd family.</text>
</comment>